<reference key="1">
    <citation type="journal article" date="2005" name="Nature">
        <title>The genome of the social amoeba Dictyostelium discoideum.</title>
        <authorList>
            <person name="Eichinger L."/>
            <person name="Pachebat J.A."/>
            <person name="Gloeckner G."/>
            <person name="Rajandream M.A."/>
            <person name="Sucgang R."/>
            <person name="Berriman M."/>
            <person name="Song J."/>
            <person name="Olsen R."/>
            <person name="Szafranski K."/>
            <person name="Xu Q."/>
            <person name="Tunggal B."/>
            <person name="Kummerfeld S."/>
            <person name="Madera M."/>
            <person name="Konfortov B.A."/>
            <person name="Rivero F."/>
            <person name="Bankier A.T."/>
            <person name="Lehmann R."/>
            <person name="Hamlin N."/>
            <person name="Davies R."/>
            <person name="Gaudet P."/>
            <person name="Fey P."/>
            <person name="Pilcher K."/>
            <person name="Chen G."/>
            <person name="Saunders D."/>
            <person name="Sodergren E.J."/>
            <person name="Davis P."/>
            <person name="Kerhornou A."/>
            <person name="Nie X."/>
            <person name="Hall N."/>
            <person name="Anjard C."/>
            <person name="Hemphill L."/>
            <person name="Bason N."/>
            <person name="Farbrother P."/>
            <person name="Desany B."/>
            <person name="Just E."/>
            <person name="Morio T."/>
            <person name="Rost R."/>
            <person name="Churcher C.M."/>
            <person name="Cooper J."/>
            <person name="Haydock S."/>
            <person name="van Driessche N."/>
            <person name="Cronin A."/>
            <person name="Goodhead I."/>
            <person name="Muzny D.M."/>
            <person name="Mourier T."/>
            <person name="Pain A."/>
            <person name="Lu M."/>
            <person name="Harper D."/>
            <person name="Lindsay R."/>
            <person name="Hauser H."/>
            <person name="James K.D."/>
            <person name="Quiles M."/>
            <person name="Madan Babu M."/>
            <person name="Saito T."/>
            <person name="Buchrieser C."/>
            <person name="Wardroper A."/>
            <person name="Felder M."/>
            <person name="Thangavelu M."/>
            <person name="Johnson D."/>
            <person name="Knights A."/>
            <person name="Loulseged H."/>
            <person name="Mungall K.L."/>
            <person name="Oliver K."/>
            <person name="Price C."/>
            <person name="Quail M.A."/>
            <person name="Urushihara H."/>
            <person name="Hernandez J."/>
            <person name="Rabbinowitsch E."/>
            <person name="Steffen D."/>
            <person name="Sanders M."/>
            <person name="Ma J."/>
            <person name="Kohara Y."/>
            <person name="Sharp S."/>
            <person name="Simmonds M.N."/>
            <person name="Spiegler S."/>
            <person name="Tivey A."/>
            <person name="Sugano S."/>
            <person name="White B."/>
            <person name="Walker D."/>
            <person name="Woodward J.R."/>
            <person name="Winckler T."/>
            <person name="Tanaka Y."/>
            <person name="Shaulsky G."/>
            <person name="Schleicher M."/>
            <person name="Weinstock G.M."/>
            <person name="Rosenthal A."/>
            <person name="Cox E.C."/>
            <person name="Chisholm R.L."/>
            <person name="Gibbs R.A."/>
            <person name="Loomis W.F."/>
            <person name="Platzer M."/>
            <person name="Kay R.R."/>
            <person name="Williams J.G."/>
            <person name="Dear P.H."/>
            <person name="Noegel A.A."/>
            <person name="Barrell B.G."/>
            <person name="Kuspa A."/>
        </authorList>
    </citation>
    <scope>NUCLEOTIDE SEQUENCE [LARGE SCALE GENOMIC DNA]</scope>
    <source>
        <strain>AX4</strain>
    </source>
</reference>
<dbReference type="EMBL" id="AAFI02000148">
    <property type="protein sequence ID" value="EAL62572.2"/>
    <property type="molecule type" value="Genomic_DNA"/>
</dbReference>
<dbReference type="RefSeq" id="XP_636079.2">
    <property type="nucleotide sequence ID" value="XM_630987.2"/>
</dbReference>
<dbReference type="SMR" id="Q54H39"/>
<dbReference type="FunCoup" id="Q54H39">
    <property type="interactions" value="588"/>
</dbReference>
<dbReference type="STRING" id="44689.Q54H39"/>
<dbReference type="PaxDb" id="44689-DDB0234236"/>
<dbReference type="EnsemblProtists" id="EAL62572">
    <property type="protein sequence ID" value="EAL62572"/>
    <property type="gene ID" value="DDB_G0289721"/>
</dbReference>
<dbReference type="GeneID" id="8627289"/>
<dbReference type="KEGG" id="ddi:DDB_G0289721"/>
<dbReference type="dictyBase" id="DDB_G0289721">
    <property type="gene designation" value="ap2s1"/>
</dbReference>
<dbReference type="VEuPathDB" id="AmoebaDB:DDB_G0289721"/>
<dbReference type="eggNOG" id="KOG0935">
    <property type="taxonomic scope" value="Eukaryota"/>
</dbReference>
<dbReference type="HOGENOM" id="CLU_061221_3_2_1"/>
<dbReference type="InParanoid" id="Q54H39"/>
<dbReference type="OMA" id="QSNFVEY"/>
<dbReference type="PhylomeDB" id="Q54H39"/>
<dbReference type="Reactome" id="R-DDI-437239">
    <property type="pathway name" value="Recycling pathway of L1"/>
</dbReference>
<dbReference type="Reactome" id="R-DDI-8856825">
    <property type="pathway name" value="Cargo recognition for clathrin-mediated endocytosis"/>
</dbReference>
<dbReference type="Reactome" id="R-DDI-8856828">
    <property type="pathway name" value="Clathrin-mediated endocytosis"/>
</dbReference>
<dbReference type="Reactome" id="R-DDI-8866427">
    <property type="pathway name" value="VLDLR internalisation and degradation"/>
</dbReference>
<dbReference type="Reactome" id="R-DDI-8964038">
    <property type="pathway name" value="LDL clearance"/>
</dbReference>
<dbReference type="PRO" id="PR:Q54H39"/>
<dbReference type="Proteomes" id="UP000002195">
    <property type="component" value="Chromosome 5"/>
</dbReference>
<dbReference type="GO" id="GO:0030122">
    <property type="term" value="C:AP-2 adaptor complex"/>
    <property type="evidence" value="ECO:0000314"/>
    <property type="project" value="dictyBase"/>
</dbReference>
<dbReference type="GO" id="GO:0030132">
    <property type="term" value="C:clathrin coat of coated pit"/>
    <property type="evidence" value="ECO:0000305"/>
    <property type="project" value="dictyBase"/>
</dbReference>
<dbReference type="GO" id="GO:0043231">
    <property type="term" value="C:intracellular membrane-bounded organelle"/>
    <property type="evidence" value="ECO:0000318"/>
    <property type="project" value="GO_Central"/>
</dbReference>
<dbReference type="GO" id="GO:0035615">
    <property type="term" value="F:clathrin adaptor activity"/>
    <property type="evidence" value="ECO:0007669"/>
    <property type="project" value="InterPro"/>
</dbReference>
<dbReference type="GO" id="GO:0072583">
    <property type="term" value="P:clathrin-dependent endocytosis"/>
    <property type="evidence" value="ECO:0007669"/>
    <property type="project" value="InterPro"/>
</dbReference>
<dbReference type="GO" id="GO:0015031">
    <property type="term" value="P:protein transport"/>
    <property type="evidence" value="ECO:0007669"/>
    <property type="project" value="UniProtKB-KW"/>
</dbReference>
<dbReference type="GO" id="GO:0016192">
    <property type="term" value="P:vesicle-mediated transport"/>
    <property type="evidence" value="ECO:0000318"/>
    <property type="project" value="GO_Central"/>
</dbReference>
<dbReference type="CDD" id="cd14833">
    <property type="entry name" value="AP2_sigma"/>
    <property type="match status" value="1"/>
</dbReference>
<dbReference type="FunFam" id="3.30.450.60:FF:000011">
    <property type="entry name" value="AP complex subunit sigma"/>
    <property type="match status" value="1"/>
</dbReference>
<dbReference type="Gene3D" id="3.30.450.60">
    <property type="match status" value="1"/>
</dbReference>
<dbReference type="InterPro" id="IPR016635">
    <property type="entry name" value="AP_complex_ssu"/>
</dbReference>
<dbReference type="InterPro" id="IPR022775">
    <property type="entry name" value="AP_mu_sigma_su"/>
</dbReference>
<dbReference type="InterPro" id="IPR027156">
    <property type="entry name" value="APS2"/>
</dbReference>
<dbReference type="InterPro" id="IPR011012">
    <property type="entry name" value="Longin-like_dom_sf"/>
</dbReference>
<dbReference type="PANTHER" id="PTHR11753">
    <property type="entry name" value="ADAPTOR COMPLEXES SMALL SUBUNIT FAMILY"/>
    <property type="match status" value="1"/>
</dbReference>
<dbReference type="Pfam" id="PF01217">
    <property type="entry name" value="Clat_adaptor_s"/>
    <property type="match status" value="1"/>
</dbReference>
<dbReference type="PIRSF" id="PIRSF015588">
    <property type="entry name" value="AP_complex_sigma"/>
    <property type="match status" value="1"/>
</dbReference>
<dbReference type="SUPFAM" id="SSF64356">
    <property type="entry name" value="SNARE-like"/>
    <property type="match status" value="1"/>
</dbReference>
<organism>
    <name type="scientific">Dictyostelium discoideum</name>
    <name type="common">Social amoeba</name>
    <dbReference type="NCBI Taxonomy" id="44689"/>
    <lineage>
        <taxon>Eukaryota</taxon>
        <taxon>Amoebozoa</taxon>
        <taxon>Evosea</taxon>
        <taxon>Eumycetozoa</taxon>
        <taxon>Dictyostelia</taxon>
        <taxon>Dictyosteliales</taxon>
        <taxon>Dictyosteliaceae</taxon>
        <taxon>Dictyostelium</taxon>
    </lineage>
</organism>
<feature type="chain" id="PRO_0000328667" description="AP-2 complex subunit sigma">
    <location>
        <begin position="1"/>
        <end position="142"/>
    </location>
</feature>
<comment type="function">
    <text evidence="1">Component of the adaptor complexes which link clathrin to receptors in coated vesicles. Clathrin-associated protein complexes are believed to interact with the cytoplasmic tails of membrane proteins, leading to their selection and concentration (By similarity).</text>
</comment>
<comment type="subunit">
    <text>Adaptor protein complex 2 (AP-2) is a heterotetramer composed of two large adaptins (alpha-type and beta-type subunits), a medium adaptin (mu-type subunit AP50) and a small adaptin (sigma-type subunit AP17).</text>
</comment>
<comment type="subcellular location">
    <subcellularLocation>
        <location>Cell membrane</location>
    </subcellularLocation>
    <subcellularLocation>
        <location evidence="1">Membrane</location>
        <location evidence="1">Coated pit</location>
        <topology evidence="1">Peripheral membrane protein</topology>
        <orientation evidence="1">Cytoplasmic side</orientation>
    </subcellularLocation>
    <text evidence="1">Component of the coat surrounding the cytoplasmic face of coated vesicles in the plasma membrane.</text>
</comment>
<comment type="similarity">
    <text evidence="2">Belongs to the adaptor complexes small subunit family.</text>
</comment>
<keyword id="KW-1003">Cell membrane</keyword>
<keyword id="KW-0168">Coated pit</keyword>
<keyword id="KW-0254">Endocytosis</keyword>
<keyword id="KW-0472">Membrane</keyword>
<keyword id="KW-0653">Protein transport</keyword>
<keyword id="KW-1185">Reference proteome</keyword>
<keyword id="KW-0813">Transport</keyword>
<protein>
    <recommendedName>
        <fullName>AP-2 complex subunit sigma</fullName>
    </recommendedName>
    <alternativeName>
        <fullName>Adaptin small chain</fullName>
    </alternativeName>
    <alternativeName>
        <fullName>Adaptor-related protein complex 2 subunit sigma</fullName>
    </alternativeName>
    <alternativeName>
        <fullName>Clathrin assembly protein 2 sigma small chain</fullName>
    </alternativeName>
    <alternativeName>
        <fullName>Sigma2-adaptin</fullName>
    </alternativeName>
</protein>
<proteinExistence type="inferred from homology"/>
<gene>
    <name type="primary">ap2s1</name>
    <name type="ORF">DDB_G0289721</name>
</gene>
<sequence>MIHFILIQNRQGKTRLSKWYTPYEDVEKRKLSHEIHKIVNSRETKFTNFVEFRTHRIVYRRYAGLFFSVCVDPTDNELFCLEAIHLFVEVLDAYFGNVCELDLVFNFYKVYAIIDEVFLAGELMEPSKHVILQRMEFLDNLP</sequence>
<accession>Q54H39</accession>
<name>AP2S_DICDI</name>
<evidence type="ECO:0000250" key="1"/>
<evidence type="ECO:0000305" key="2"/>